<gene>
    <name evidence="28" type="primary">C8A</name>
</gene>
<keyword id="KW-0002">3D-structure</keyword>
<keyword id="KW-0165">Cleavage on pair of basic residues</keyword>
<keyword id="KW-0179">Complement alternate pathway</keyword>
<keyword id="KW-0180">Complement pathway</keyword>
<keyword id="KW-0204">Cytolysis</keyword>
<keyword id="KW-0903">Direct protein sequencing</keyword>
<keyword id="KW-0225">Disease variant</keyword>
<keyword id="KW-1015">Disulfide bond</keyword>
<keyword id="KW-0245">EGF-like domain</keyword>
<keyword id="KW-0325">Glycoprotein</keyword>
<keyword id="KW-0391">Immunity</keyword>
<keyword id="KW-0399">Innate immunity</keyword>
<keyword id="KW-0472">Membrane</keyword>
<keyword id="KW-0473">Membrane attack complex</keyword>
<keyword id="KW-1267">Proteomics identification</keyword>
<keyword id="KW-1185">Reference proteome</keyword>
<keyword id="KW-0677">Repeat</keyword>
<keyword id="KW-0964">Secreted</keyword>
<keyword id="KW-0732">Signal</keyword>
<keyword id="KW-1052">Target cell membrane</keyword>
<keyword id="KW-1053">Target membrane</keyword>
<keyword id="KW-0812">Transmembrane</keyword>
<keyword id="KW-1134">Transmembrane beta strand</keyword>
<comment type="function">
    <text evidence="10 14 15 16 18 22 23">Component of the membrane attack complex (MAC), a multiprotein complex activated by the complement cascade, which inserts into a target cell membrane and forms a pore, leading to target cell membrane rupture and cell lysis (PubMed:17872444, PubMed:22832194, PubMed:26841837, PubMed:27052168, PubMed:30552328, PubMed:7440581). The MAC is initiated by proteolytic cleavage of C5 into complement C5b in response to the classical, alternative, lectin and GZMK complement pathways (PubMed:17872444, PubMed:30552328, PubMed:7440581). The complement pathways consist in a cascade of proteins that leads to phagocytosis and breakdown of pathogens and signaling that strengthens the adaptive immune system (PubMed:17872444, PubMed:30552328, PubMed:7440581). C8A, together with C8B and C8G, inserts into the target membrane, but does not form pores by itself (PubMed:17872444, PubMed:30552328). During MAC assembly, associates with C5b, C6 and C7 to form the C5b8 intermediate complex that inserts into the target membrane and traverses the bilayer increasing membrane rigidity (PubMed:30552328, PubMed:6833260).</text>
</comment>
<comment type="activity regulation">
    <text evidence="20 21">Membrane attack complex (MAC) assembly is inhibited by CD59, thereby protecting self-cells from damage during complement activation (PubMed:36797260). CD59 acts by binding to the beta-haipins of C8 (C8A and C8B), forming an intermolecular beta-sheet that prevents incorporation of the multiple copies of C9 required for complete formation of the osmolytic pore (PubMed:36797260). MAC assembly is also inhibited by clusterin (CLU) chaperones that inhibit polymerization of C9 (PubMed:34667172).</text>
</comment>
<comment type="subunit">
    <text evidence="9 11 13 14 15 16 18 19 23">Heterotrimer of 3 chains: alpha (C8A), beta (C8B) and gamma (C8G); the alpha and gamma chains are disulfide bonded (PubMed:17692377, PubMed:18440555, PubMed:21454577). Component of the membrane attack complex (MAC), composed of complement C5b, C6, C7, C8A, C8B, C8G and multiple copies of the pore-forming subunit C9 (PubMed:22832194, PubMed:26841837, PubMed:27052168, PubMed:30552328, PubMed:31061395, PubMed:7440581).</text>
</comment>
<comment type="interaction">
    <interactant intactId="EBI-9021639">
        <id>P07357</id>
    </interactant>
    <interactant intactId="EBI-17231387">
        <id>Q6ZVE7</id>
        <label>GOLT1A</label>
    </interactant>
    <organismsDiffer>false</organismsDiffer>
    <experiments>3</experiments>
</comment>
<comment type="interaction">
    <interactant intactId="EBI-9021639">
        <id>P07357</id>
    </interactant>
    <interactant intactId="EBI-13345167">
        <id>Q8TDT2</id>
        <label>GPR152</label>
    </interactant>
    <organismsDiffer>false</organismsDiffer>
    <experiments>3</experiments>
</comment>
<comment type="interaction">
    <interactant intactId="EBI-9021639">
        <id>P07357</id>
    </interactant>
    <interactant intactId="EBI-6163737">
        <id>Q8N4V1</id>
        <label>MMGT1</label>
    </interactant>
    <organismsDiffer>false</organismsDiffer>
    <experiments>3</experiments>
</comment>
<comment type="interaction">
    <interactant intactId="EBI-9021639">
        <id>P07357</id>
    </interactant>
    <interactant intactId="EBI-3923031">
        <id>Q14973</id>
        <label>SLC10A1</label>
    </interactant>
    <organismsDiffer>false</organismsDiffer>
    <experiments>3</experiments>
</comment>
<comment type="interaction">
    <interactant intactId="EBI-9021639">
        <id>P07357</id>
    </interactant>
    <interactant intactId="EBI-4289564">
        <id>P30825</id>
        <label>SLC7A1</label>
    </interactant>
    <organismsDiffer>false</organismsDiffer>
    <experiments>3</experiments>
</comment>
<comment type="subcellular location">
    <subcellularLocation>
        <location evidence="17">Secreted</location>
    </subcellularLocation>
    <subcellularLocation>
        <location evidence="18">Target cell membrane</location>
        <topology evidence="18 19">Multi-pass membrane protein</topology>
    </subcellularLocation>
    <text evidence="17 18 19">Secreted as soluble protein (PubMed:2820471). Inserts into the cell membrane of target cells (PubMed:30552328, PubMed:31061395).</text>
</comment>
<comment type="disease" evidence="25">
    <disease id="DI-01373">
        <name>Complement component 8 deficiency, 1</name>
        <acronym>C8D1</acronym>
        <description>A rare defect of the complement classical pathway associated with susceptibility to severe recurrent infections, predominantly by Neisseria gonorrhoeae or Neisseria meningitidis.</description>
        <dbReference type="MIM" id="613790"/>
    </disease>
    <text>Disease susceptibility is associated with variants affecting the gene represented in this entry.</text>
</comment>
<comment type="similarity">
    <text evidence="27">Belongs to the complement C6/C7/C8/C9 family.</text>
</comment>
<accession>P07357</accession>
<accession>A2RUI4</accession>
<accession>A2RUI5</accession>
<accession>Q13668</accession>
<accession>Q9H130</accession>
<feature type="signal peptide" evidence="1">
    <location>
        <begin position="1"/>
        <end position="20"/>
    </location>
</feature>
<feature type="propeptide" id="PRO_0000023585" evidence="1">
    <location>
        <begin position="21"/>
        <end position="30"/>
    </location>
</feature>
<feature type="chain" id="PRO_0000023586" description="Complement component C8 alpha chain">
    <location>
        <begin position="31"/>
        <end position="584"/>
    </location>
</feature>
<feature type="transmembrane region" description="Beta stranded" evidence="18 32">
    <location>
        <begin position="248"/>
        <end position="256"/>
    </location>
</feature>
<feature type="transmembrane region" description="Beta stranded" evidence="18 32">
    <location>
        <begin position="259"/>
        <end position="266"/>
    </location>
</feature>
<feature type="transmembrane region" description="Beta stranded" evidence="18 32">
    <location>
        <begin position="377"/>
        <end position="384"/>
    </location>
</feature>
<feature type="transmembrane region" description="Beta stranded" evidence="18 32">
    <location>
        <begin position="390"/>
        <end position="395"/>
    </location>
</feature>
<feature type="domain" description="TSP type-1 1" evidence="3">
    <location>
        <begin position="38"/>
        <end position="91"/>
    </location>
</feature>
<feature type="domain" description="LDL-receptor class A" evidence="2">
    <location>
        <begin position="94"/>
        <end position="132"/>
    </location>
</feature>
<feature type="domain" description="MACPF" evidence="4">
    <location>
        <begin position="135"/>
        <end position="498"/>
    </location>
</feature>
<feature type="domain" description="EGF-like">
    <location>
        <begin position="499"/>
        <end position="529"/>
    </location>
</feature>
<feature type="domain" description="TSP type-1 2" evidence="3">
    <location>
        <begin position="539"/>
        <end position="583"/>
    </location>
</feature>
<feature type="region of interest" description="Disordered" evidence="5">
    <location>
        <begin position="562"/>
        <end position="584"/>
    </location>
</feature>
<feature type="binding site" evidence="13 30">
    <location>
        <position position="113"/>
    </location>
    <ligand>
        <name>Ca(2+)</name>
        <dbReference type="ChEBI" id="CHEBI:29108"/>
    </ligand>
</feature>
<feature type="binding site" evidence="13 30">
    <location>
        <position position="116"/>
    </location>
    <ligand>
        <name>Ca(2+)</name>
        <dbReference type="ChEBI" id="CHEBI:29108"/>
    </ligand>
</feature>
<feature type="binding site" evidence="13 30">
    <location>
        <position position="118"/>
    </location>
    <ligand>
        <name>Ca(2+)</name>
        <dbReference type="ChEBI" id="CHEBI:29108"/>
    </ligand>
</feature>
<feature type="binding site" evidence="13 30">
    <location>
        <position position="120"/>
    </location>
    <ligand>
        <name>Ca(2+)</name>
        <dbReference type="ChEBI" id="CHEBI:29108"/>
    </ligand>
</feature>
<feature type="binding site" evidence="13 30">
    <location>
        <position position="126"/>
    </location>
    <ligand>
        <name>Ca(2+)</name>
        <dbReference type="ChEBI" id="CHEBI:29108"/>
    </ligand>
</feature>
<feature type="binding site" evidence="13 30">
    <location>
        <position position="127"/>
    </location>
    <ligand>
        <name>Ca(2+)</name>
        <dbReference type="ChEBI" id="CHEBI:29108"/>
    </ligand>
</feature>
<feature type="site" description="Not glycosylated">
    <location>
        <position position="43"/>
    </location>
</feature>
<feature type="glycosylation site" description="C-linked (Man) tryptophan" evidence="6">
    <location>
        <position position="44"/>
    </location>
</feature>
<feature type="glycosylation site" description="N-linked (GlcNAc...) asparagine" evidence="8 12 18">
    <location>
        <position position="437"/>
    </location>
</feature>
<feature type="glycosylation site" description="C-linked (Man) tryptophan" evidence="6">
    <location>
        <position position="542"/>
    </location>
</feature>
<feature type="glycosylation site" description="C-linked (Man) tryptophan" evidence="6">
    <location>
        <position position="545"/>
    </location>
</feature>
<feature type="glycosylation site" description="C-linked (Man) tryptophan" evidence="6">
    <location>
        <position position="548"/>
    </location>
</feature>
<feature type="disulfide bond" evidence="18 21 30 31 32">
    <location>
        <begin position="39"/>
        <end position="74"/>
    </location>
</feature>
<feature type="disulfide bond" evidence="18 21 30 31 32">
    <location>
        <begin position="50"/>
        <end position="84"/>
    </location>
</feature>
<feature type="disulfide bond" evidence="18 21 30 31 32">
    <location>
        <begin position="53"/>
        <end position="90"/>
    </location>
</feature>
<feature type="disulfide bond" evidence="18 21 30 31 32">
    <location>
        <begin position="96"/>
        <end position="108"/>
    </location>
</feature>
<feature type="disulfide bond" evidence="18 21 30 31 32">
    <location>
        <begin position="102"/>
        <end position="121"/>
    </location>
</feature>
<feature type="disulfide bond" evidence="18 21 30 31 32">
    <location>
        <begin position="115"/>
        <end position="130"/>
    </location>
</feature>
<feature type="disulfide bond" evidence="10 18 21 30 31 32">
    <location>
        <begin position="140"/>
        <end position="177"/>
    </location>
</feature>
<feature type="disulfide bond" description="Interchain (with C-60 in C8-gamma chain)" evidence="11">
    <location>
        <position position="194"/>
    </location>
</feature>
<feature type="disulfide bond" evidence="18 21 30 31 32">
    <location>
        <begin position="375"/>
        <end position="399"/>
    </location>
</feature>
<feature type="disulfide bond" evidence="18 21 30 31 32">
    <location>
        <begin position="497"/>
        <end position="544"/>
    </location>
</feature>
<feature type="disulfide bond" evidence="18 21 30 31 32">
    <location>
        <begin position="499"/>
        <end position="515"/>
    </location>
</feature>
<feature type="disulfide bond" evidence="18 21 30 31 32">
    <location>
        <begin position="502"/>
        <end position="517"/>
    </location>
</feature>
<feature type="disulfide bond" evidence="18 21 30 31 32">
    <location>
        <begin position="519"/>
        <end position="528"/>
    </location>
</feature>
<feature type="disulfide bond" evidence="18 21 30 31 32">
    <location>
        <begin position="551"/>
        <end position="584"/>
    </location>
</feature>
<feature type="disulfide bond" evidence="18 21 30 31 32">
    <location>
        <begin position="562"/>
        <end position="574"/>
    </location>
</feature>
<feature type="sequence variant" id="VAR_011889" description="In allele C8A*B; dbSNP:rs652785." evidence="7 24">
    <original>Q</original>
    <variation>K</variation>
    <location>
        <position position="93"/>
    </location>
</feature>
<feature type="sequence variant" id="VAR_011890" description="In dbSNP:rs706479.">
    <original>T</original>
    <variation>I</variation>
    <location>
        <position position="407"/>
    </location>
</feature>
<feature type="sequence variant" id="VAR_090457" description="In C8D1." evidence="25">
    <location>
        <begin position="424"/>
        <end position="584"/>
    </location>
</feature>
<feature type="sequence variant" id="VAR_033800" description="In dbSNP:rs17114555.">
    <original>D</original>
    <variation>N</variation>
    <location>
        <position position="458"/>
    </location>
</feature>
<feature type="sequence variant" id="VAR_011891" description="In dbSNP:rs1620075.">
    <original>R</original>
    <variation>L</variation>
    <location>
        <position position="485"/>
    </location>
</feature>
<feature type="sequence variant" id="VAR_011892" description="In dbSNP:rs1342440.">
    <original>E</original>
    <variation>Q</variation>
    <location>
        <position position="561"/>
    </location>
</feature>
<feature type="sequence variant" id="VAR_033801" description="In dbSNP:rs17300936.">
    <original>P</original>
    <variation>L</variation>
    <location>
        <position position="575"/>
    </location>
</feature>
<feature type="sequence conflict" description="In Ref. 3; AAA82124." evidence="27" ref="3">
    <original>P</original>
    <variation>S</variation>
    <location>
        <position position="575"/>
    </location>
</feature>
<feature type="turn" evidence="41">
    <location>
        <begin position="52"/>
        <end position="54"/>
    </location>
</feature>
<feature type="strand" evidence="41">
    <location>
        <begin position="56"/>
        <end position="60"/>
    </location>
</feature>
<feature type="strand" evidence="41">
    <location>
        <begin position="63"/>
        <end position="65"/>
    </location>
</feature>
<feature type="strand" evidence="42">
    <location>
        <begin position="69"/>
        <end position="71"/>
    </location>
</feature>
<feature type="strand" evidence="41">
    <location>
        <begin position="78"/>
        <end position="83"/>
    </location>
</feature>
<feature type="strand" evidence="41">
    <location>
        <begin position="97"/>
        <end position="101"/>
    </location>
</feature>
<feature type="strand" evidence="41">
    <location>
        <begin position="103"/>
        <end position="105"/>
    </location>
</feature>
<feature type="helix" evidence="41">
    <location>
        <begin position="111"/>
        <end position="113"/>
    </location>
</feature>
<feature type="strand" evidence="41">
    <location>
        <begin position="116"/>
        <end position="118"/>
    </location>
</feature>
<feature type="strand" evidence="41">
    <location>
        <begin position="121"/>
        <end position="123"/>
    </location>
</feature>
<feature type="strand" evidence="41">
    <location>
        <begin position="127"/>
        <end position="129"/>
    </location>
</feature>
<feature type="strand" evidence="39">
    <location>
        <begin position="140"/>
        <end position="143"/>
    </location>
</feature>
<feature type="helix" evidence="40">
    <location>
        <begin position="149"/>
        <end position="152"/>
    </location>
</feature>
<feature type="strand" evidence="40">
    <location>
        <begin position="154"/>
        <end position="157"/>
    </location>
</feature>
<feature type="turn" evidence="40">
    <location>
        <begin position="158"/>
        <end position="161"/>
    </location>
</feature>
<feature type="strand" evidence="40">
    <location>
        <begin position="162"/>
        <end position="168"/>
    </location>
</feature>
<feature type="strand" evidence="40">
    <location>
        <begin position="179"/>
        <end position="182"/>
    </location>
</feature>
<feature type="turn" evidence="39">
    <location>
        <begin position="183"/>
        <end position="186"/>
    </location>
</feature>
<feature type="strand" evidence="38">
    <location>
        <begin position="189"/>
        <end position="191"/>
    </location>
</feature>
<feature type="turn" evidence="38">
    <location>
        <begin position="192"/>
        <end position="195"/>
    </location>
</feature>
<feature type="strand" evidence="38">
    <location>
        <begin position="196"/>
        <end position="198"/>
    </location>
</feature>
<feature type="helix" evidence="41">
    <location>
        <begin position="201"/>
        <end position="203"/>
    </location>
</feature>
<feature type="strand" evidence="40">
    <location>
        <begin position="204"/>
        <end position="207"/>
    </location>
</feature>
<feature type="strand" evidence="40">
    <location>
        <begin position="212"/>
        <end position="217"/>
    </location>
</feature>
<feature type="strand" evidence="40">
    <location>
        <begin position="226"/>
        <end position="232"/>
    </location>
</feature>
<feature type="helix" evidence="40">
    <location>
        <begin position="233"/>
        <end position="243"/>
    </location>
</feature>
<feature type="strand" evidence="40">
    <location>
        <begin position="246"/>
        <end position="252"/>
    </location>
</feature>
<feature type="strand" evidence="40">
    <location>
        <begin position="260"/>
        <end position="266"/>
    </location>
</feature>
<feature type="helix" evidence="40">
    <location>
        <begin position="273"/>
        <end position="280"/>
    </location>
</feature>
<feature type="strand" evidence="40">
    <location>
        <begin position="287"/>
        <end position="303"/>
    </location>
</feature>
<feature type="strand" evidence="40">
    <location>
        <begin position="305"/>
        <end position="308"/>
    </location>
</feature>
<feature type="helix" evidence="40">
    <location>
        <begin position="312"/>
        <end position="319"/>
    </location>
</feature>
<feature type="helix" evidence="40">
    <location>
        <begin position="327"/>
        <end position="337"/>
    </location>
</feature>
<feature type="strand" evidence="40">
    <location>
        <begin position="339"/>
        <end position="358"/>
    </location>
</feature>
<feature type="helix" evidence="40">
    <location>
        <begin position="359"/>
        <end position="365"/>
    </location>
</feature>
<feature type="helix" evidence="40">
    <location>
        <begin position="369"/>
        <end position="379"/>
    </location>
</feature>
<feature type="helix" evidence="40">
    <location>
        <begin position="398"/>
        <end position="402"/>
    </location>
</feature>
<feature type="helix" evidence="40">
    <location>
        <begin position="408"/>
        <end position="413"/>
    </location>
</feature>
<feature type="strand" evidence="40">
    <location>
        <begin position="416"/>
        <end position="421"/>
    </location>
</feature>
<feature type="helix" evidence="42">
    <location>
        <begin position="428"/>
        <end position="436"/>
    </location>
</feature>
<feature type="helix" evidence="40">
    <location>
        <begin position="443"/>
        <end position="449"/>
    </location>
</feature>
<feature type="turn" evidence="40">
    <location>
        <begin position="450"/>
        <end position="452"/>
    </location>
</feature>
<feature type="strand" evidence="40">
    <location>
        <begin position="455"/>
        <end position="463"/>
    </location>
</feature>
<feature type="helix" evidence="40">
    <location>
        <begin position="464"/>
        <end position="470"/>
    </location>
</feature>
<feature type="helix" evidence="40">
    <location>
        <begin position="477"/>
        <end position="491"/>
    </location>
</feature>
<feature type="helix" evidence="41">
    <location>
        <begin position="496"/>
        <end position="498"/>
    </location>
</feature>
<feature type="turn" evidence="41">
    <location>
        <begin position="503"/>
        <end position="505"/>
    </location>
</feature>
<feature type="strand" evidence="41">
    <location>
        <begin position="508"/>
        <end position="511"/>
    </location>
</feature>
<feature type="strand" evidence="41">
    <location>
        <begin position="514"/>
        <end position="517"/>
    </location>
</feature>
<feature type="strand" evidence="42">
    <location>
        <begin position="520"/>
        <end position="523"/>
    </location>
</feature>
<feature type="strand" evidence="41">
    <location>
        <begin position="525"/>
        <end position="527"/>
    </location>
</feature>
<feature type="strand" evidence="42">
    <location>
        <begin position="530"/>
        <end position="532"/>
    </location>
</feature>
<feature type="strand" evidence="41">
    <location>
        <begin position="552"/>
        <end position="554"/>
    </location>
</feature>
<feature type="strand" evidence="41">
    <location>
        <begin position="556"/>
        <end position="559"/>
    </location>
</feature>
<feature type="strand" evidence="42">
    <location>
        <begin position="567"/>
        <end position="570"/>
    </location>
</feature>
<feature type="strand" evidence="41">
    <location>
        <begin position="578"/>
        <end position="582"/>
    </location>
</feature>
<name>CO8A_HUMAN</name>
<dbReference type="EMBL" id="M16974">
    <property type="protein sequence ID" value="AAA52200.1"/>
    <property type="molecule type" value="mRNA"/>
</dbReference>
<dbReference type="EMBL" id="U08006">
    <property type="protein sequence ID" value="AAA82124.1"/>
    <property type="molecule type" value="Genomic_DNA"/>
</dbReference>
<dbReference type="EMBL" id="U07996">
    <property type="protein sequence ID" value="AAA82124.1"/>
    <property type="status" value="JOINED"/>
    <property type="molecule type" value="Genomic_DNA"/>
</dbReference>
<dbReference type="EMBL" id="U07997">
    <property type="protein sequence ID" value="AAA82124.1"/>
    <property type="status" value="JOINED"/>
    <property type="molecule type" value="Genomic_DNA"/>
</dbReference>
<dbReference type="EMBL" id="U07998">
    <property type="protein sequence ID" value="AAA82124.1"/>
    <property type="status" value="JOINED"/>
    <property type="molecule type" value="Genomic_DNA"/>
</dbReference>
<dbReference type="EMBL" id="U07999">
    <property type="protein sequence ID" value="AAA82124.1"/>
    <property type="status" value="JOINED"/>
    <property type="molecule type" value="Genomic_DNA"/>
</dbReference>
<dbReference type="EMBL" id="U08000">
    <property type="protein sequence ID" value="AAA82124.1"/>
    <property type="status" value="JOINED"/>
    <property type="molecule type" value="Genomic_DNA"/>
</dbReference>
<dbReference type="EMBL" id="U08001">
    <property type="protein sequence ID" value="AAA82124.1"/>
    <property type="status" value="JOINED"/>
    <property type="molecule type" value="Genomic_DNA"/>
</dbReference>
<dbReference type="EMBL" id="U08002">
    <property type="protein sequence ID" value="AAA82124.1"/>
    <property type="status" value="JOINED"/>
    <property type="molecule type" value="Genomic_DNA"/>
</dbReference>
<dbReference type="EMBL" id="U08003">
    <property type="protein sequence ID" value="AAA82124.1"/>
    <property type="status" value="JOINED"/>
    <property type="molecule type" value="Genomic_DNA"/>
</dbReference>
<dbReference type="EMBL" id="U08004">
    <property type="protein sequence ID" value="AAA82124.1"/>
    <property type="status" value="JOINED"/>
    <property type="molecule type" value="Genomic_DNA"/>
</dbReference>
<dbReference type="EMBL" id="U08005">
    <property type="protein sequence ID" value="AAA82124.1"/>
    <property type="status" value="JOINED"/>
    <property type="molecule type" value="Genomic_DNA"/>
</dbReference>
<dbReference type="EMBL" id="AL121998">
    <property type="status" value="NOT_ANNOTATED_CDS"/>
    <property type="molecule type" value="Genomic_DNA"/>
</dbReference>
<dbReference type="EMBL" id="BC132911">
    <property type="protein sequence ID" value="AAI32912.1"/>
    <property type="molecule type" value="mRNA"/>
</dbReference>
<dbReference type="EMBL" id="BC132913">
    <property type="protein sequence ID" value="AAI32914.1"/>
    <property type="molecule type" value="mRNA"/>
</dbReference>
<dbReference type="CCDS" id="CCDS606.1"/>
<dbReference type="PIR" id="I37213">
    <property type="entry name" value="C8HUA"/>
</dbReference>
<dbReference type="RefSeq" id="NP_000553.1">
    <property type="nucleotide sequence ID" value="NM_000562.3"/>
</dbReference>
<dbReference type="PDB" id="2QOS">
    <property type="method" value="X-ray"/>
    <property type="resolution" value="1.81 A"/>
    <property type="chains" value="A=188-198"/>
</dbReference>
<dbReference type="PDB" id="2QQH">
    <property type="method" value="X-ray"/>
    <property type="resolution" value="2.50 A"/>
    <property type="chains" value="A=133-366, A=410-492"/>
</dbReference>
<dbReference type="PDB" id="2RD7">
    <property type="method" value="X-ray"/>
    <property type="resolution" value="2.15 A"/>
    <property type="chains" value="A=133-492"/>
</dbReference>
<dbReference type="PDB" id="3OJY">
    <property type="method" value="X-ray"/>
    <property type="resolution" value="2.51 A"/>
    <property type="chains" value="A=31-584"/>
</dbReference>
<dbReference type="PDB" id="6H03">
    <property type="method" value="EM"/>
    <property type="resolution" value="5.60 A"/>
    <property type="chains" value="F=31-584"/>
</dbReference>
<dbReference type="PDB" id="6H04">
    <property type="method" value="EM"/>
    <property type="resolution" value="5.60 A"/>
    <property type="chains" value="F=31-584"/>
</dbReference>
<dbReference type="PDB" id="7NYC">
    <property type="method" value="EM"/>
    <property type="resolution" value="3.50 A"/>
    <property type="chains" value="E=31-584"/>
</dbReference>
<dbReference type="PDB" id="7NYD">
    <property type="method" value="EM"/>
    <property type="resolution" value="3.30 A"/>
    <property type="chains" value="E=31-584"/>
</dbReference>
<dbReference type="PDB" id="8B0F">
    <property type="method" value="EM"/>
    <property type="resolution" value="3.00 A"/>
    <property type="chains" value="E=1-584"/>
</dbReference>
<dbReference type="PDB" id="8B0G">
    <property type="method" value="EM"/>
    <property type="resolution" value="3.30 A"/>
    <property type="chains" value="E=1-584"/>
</dbReference>
<dbReference type="PDB" id="8B0H">
    <property type="method" value="EM"/>
    <property type="resolution" value="3.30 A"/>
    <property type="chains" value="E=1-584"/>
</dbReference>
<dbReference type="PDBsum" id="2QOS"/>
<dbReference type="PDBsum" id="2QQH"/>
<dbReference type="PDBsum" id="2RD7"/>
<dbReference type="PDBsum" id="3OJY"/>
<dbReference type="PDBsum" id="6H03"/>
<dbReference type="PDBsum" id="6H04"/>
<dbReference type="PDBsum" id="7NYC"/>
<dbReference type="PDBsum" id="7NYD"/>
<dbReference type="PDBsum" id="8B0F"/>
<dbReference type="PDBsum" id="8B0G"/>
<dbReference type="PDBsum" id="8B0H"/>
<dbReference type="EMDB" id="EMD-0106"/>
<dbReference type="EMDB" id="EMD-0107"/>
<dbReference type="EMDB" id="EMD-12649"/>
<dbReference type="EMDB" id="EMD-12650"/>
<dbReference type="EMDB" id="EMD-12651"/>
<dbReference type="EMDB" id="EMD-15779"/>
<dbReference type="EMDB" id="EMD-15780"/>
<dbReference type="EMDB" id="EMD-15781"/>
<dbReference type="EMDB" id="EMD-3289"/>
<dbReference type="SMR" id="P07357"/>
<dbReference type="BioGRID" id="107192">
    <property type="interactions" value="22"/>
</dbReference>
<dbReference type="ComplexPortal" id="CPX-6159">
    <property type="entry name" value="Membrane attack complex"/>
</dbReference>
<dbReference type="DIP" id="DIP-1125N"/>
<dbReference type="FunCoup" id="P07357">
    <property type="interactions" value="139"/>
</dbReference>
<dbReference type="IntAct" id="P07357">
    <property type="interactions" value="17"/>
</dbReference>
<dbReference type="STRING" id="9606.ENSP00000354458"/>
<dbReference type="DrugBank" id="DB01593">
    <property type="generic name" value="Zinc"/>
</dbReference>
<dbReference type="DrugBank" id="DB14487">
    <property type="generic name" value="Zinc acetate"/>
</dbReference>
<dbReference type="TCDB" id="1.C.39.3.1">
    <property type="family name" value="the membrane attack complex/perforin (macpf) family"/>
</dbReference>
<dbReference type="GlyConnect" id="1148">
    <property type="glycosylation" value="3 N-Linked glycans (1 site)"/>
</dbReference>
<dbReference type="GlyCosmos" id="P07357">
    <property type="glycosylation" value="5 sites, 6 glycans"/>
</dbReference>
<dbReference type="GlyGen" id="P07357">
    <property type="glycosylation" value="9 sites, 16 N-linked glycans (2 sites), 1 O-linked glycan (1 site)"/>
</dbReference>
<dbReference type="iPTMnet" id="P07357"/>
<dbReference type="PhosphoSitePlus" id="P07357"/>
<dbReference type="SwissPalm" id="P07357"/>
<dbReference type="BioMuta" id="C8A"/>
<dbReference type="DMDM" id="729167"/>
<dbReference type="CPTAC" id="CPTAC-667"/>
<dbReference type="jPOST" id="P07357"/>
<dbReference type="MassIVE" id="P07357"/>
<dbReference type="PaxDb" id="9606-ENSP00000354458"/>
<dbReference type="PeptideAtlas" id="P07357"/>
<dbReference type="ProteomicsDB" id="51997"/>
<dbReference type="Antibodypedia" id="19367">
    <property type="antibodies" value="59 antibodies from 18 providers"/>
</dbReference>
<dbReference type="DNASU" id="731"/>
<dbReference type="Ensembl" id="ENST00000361249.4">
    <property type="protein sequence ID" value="ENSP00000354458.3"/>
    <property type="gene ID" value="ENSG00000157131.12"/>
</dbReference>
<dbReference type="GeneID" id="731"/>
<dbReference type="KEGG" id="hsa:731"/>
<dbReference type="MANE-Select" id="ENST00000361249.4">
    <property type="protein sequence ID" value="ENSP00000354458.3"/>
    <property type="RefSeq nucleotide sequence ID" value="NM_000562.3"/>
    <property type="RefSeq protein sequence ID" value="NP_000553.1"/>
</dbReference>
<dbReference type="UCSC" id="uc001cyo.3">
    <property type="organism name" value="human"/>
</dbReference>
<dbReference type="AGR" id="HGNC:1352"/>
<dbReference type="CTD" id="731"/>
<dbReference type="DisGeNET" id="731"/>
<dbReference type="GeneCards" id="C8A"/>
<dbReference type="HGNC" id="HGNC:1352">
    <property type="gene designation" value="C8A"/>
</dbReference>
<dbReference type="HPA" id="ENSG00000157131">
    <property type="expression patterns" value="Tissue enriched (liver)"/>
</dbReference>
<dbReference type="MalaCards" id="C8A"/>
<dbReference type="MIM" id="120950">
    <property type="type" value="gene"/>
</dbReference>
<dbReference type="MIM" id="613790">
    <property type="type" value="phenotype"/>
</dbReference>
<dbReference type="neXtProt" id="NX_P07357"/>
<dbReference type="OpenTargets" id="ENSG00000157131"/>
<dbReference type="Orphanet" id="169150">
    <property type="disease" value="Immunodeficiency due to a late component of complement deficiency"/>
</dbReference>
<dbReference type="PharmGKB" id="PA25951"/>
<dbReference type="VEuPathDB" id="HostDB:ENSG00000157131"/>
<dbReference type="eggNOG" id="ENOG502QT87">
    <property type="taxonomic scope" value="Eukaryota"/>
</dbReference>
<dbReference type="GeneTree" id="ENSGT00940000160126"/>
<dbReference type="HOGENOM" id="CLU_032453_1_0_1"/>
<dbReference type="InParanoid" id="P07357"/>
<dbReference type="OMA" id="CQPGVTI"/>
<dbReference type="OrthoDB" id="6150863at2759"/>
<dbReference type="PAN-GO" id="P07357">
    <property type="GO annotations" value="3 GO annotations based on evolutionary models"/>
</dbReference>
<dbReference type="PhylomeDB" id="P07357"/>
<dbReference type="TreeFam" id="TF330498"/>
<dbReference type="PathwayCommons" id="P07357"/>
<dbReference type="Reactome" id="R-HSA-166665">
    <property type="pathway name" value="Terminal pathway of complement"/>
</dbReference>
<dbReference type="Reactome" id="R-HSA-977606">
    <property type="pathway name" value="Regulation of Complement cascade"/>
</dbReference>
<dbReference type="SignaLink" id="P07357"/>
<dbReference type="SIGNOR" id="P07357"/>
<dbReference type="BioGRID-ORCS" id="731">
    <property type="hits" value="8 hits in 1145 CRISPR screens"/>
</dbReference>
<dbReference type="ChiTaRS" id="C8A">
    <property type="organism name" value="human"/>
</dbReference>
<dbReference type="EvolutionaryTrace" id="P07357"/>
<dbReference type="GenomeRNAi" id="731"/>
<dbReference type="Pharos" id="P07357">
    <property type="development level" value="Tbio"/>
</dbReference>
<dbReference type="PRO" id="PR:P07357"/>
<dbReference type="Proteomes" id="UP000005640">
    <property type="component" value="Chromosome 1"/>
</dbReference>
<dbReference type="RNAct" id="P07357">
    <property type="molecule type" value="protein"/>
</dbReference>
<dbReference type="Bgee" id="ENSG00000157131">
    <property type="expression patterns" value="Expressed in right lobe of liver and 47 other cell types or tissues"/>
</dbReference>
<dbReference type="GO" id="GO:0072562">
    <property type="term" value="C:blood microparticle"/>
    <property type="evidence" value="ECO:0007005"/>
    <property type="project" value="UniProtKB"/>
</dbReference>
<dbReference type="GO" id="GO:0070062">
    <property type="term" value="C:extracellular exosome"/>
    <property type="evidence" value="ECO:0007005"/>
    <property type="project" value="UniProtKB"/>
</dbReference>
<dbReference type="GO" id="GO:0005576">
    <property type="term" value="C:extracellular region"/>
    <property type="evidence" value="ECO:0000304"/>
    <property type="project" value="Reactome"/>
</dbReference>
<dbReference type="GO" id="GO:0005615">
    <property type="term" value="C:extracellular space"/>
    <property type="evidence" value="ECO:0000318"/>
    <property type="project" value="GO_Central"/>
</dbReference>
<dbReference type="GO" id="GO:0016020">
    <property type="term" value="C:membrane"/>
    <property type="evidence" value="ECO:0000304"/>
    <property type="project" value="ProtInc"/>
</dbReference>
<dbReference type="GO" id="GO:0005579">
    <property type="term" value="C:membrane attack complex"/>
    <property type="evidence" value="ECO:0000314"/>
    <property type="project" value="UniProtKB"/>
</dbReference>
<dbReference type="GO" id="GO:0005886">
    <property type="term" value="C:plasma membrane"/>
    <property type="evidence" value="ECO:0000314"/>
    <property type="project" value="HPA"/>
</dbReference>
<dbReference type="GO" id="GO:0001848">
    <property type="term" value="F:complement binding"/>
    <property type="evidence" value="ECO:0007669"/>
    <property type="project" value="Ensembl"/>
</dbReference>
<dbReference type="GO" id="GO:0044877">
    <property type="term" value="F:protein-containing complex binding"/>
    <property type="evidence" value="ECO:0007669"/>
    <property type="project" value="Ensembl"/>
</dbReference>
<dbReference type="GO" id="GO:0006956">
    <property type="term" value="P:complement activation"/>
    <property type="evidence" value="ECO:0000314"/>
    <property type="project" value="MGI"/>
</dbReference>
<dbReference type="GO" id="GO:0006957">
    <property type="term" value="P:complement activation, alternative pathway"/>
    <property type="evidence" value="ECO:0007669"/>
    <property type="project" value="UniProtKB-KW"/>
</dbReference>
<dbReference type="GO" id="GO:0006958">
    <property type="term" value="P:complement activation, classical pathway"/>
    <property type="evidence" value="ECO:0007669"/>
    <property type="project" value="UniProtKB-KW"/>
</dbReference>
<dbReference type="GO" id="GO:0006955">
    <property type="term" value="P:immune response"/>
    <property type="evidence" value="ECO:0000304"/>
    <property type="project" value="ProtInc"/>
</dbReference>
<dbReference type="GO" id="GO:0031640">
    <property type="term" value="P:killing of cells of another organism"/>
    <property type="evidence" value="ECO:0007669"/>
    <property type="project" value="UniProtKB-KW"/>
</dbReference>
<dbReference type="GO" id="GO:0050778">
    <property type="term" value="P:positive regulation of immune response"/>
    <property type="evidence" value="ECO:0000303"/>
    <property type="project" value="ComplexPortal"/>
</dbReference>
<dbReference type="CDD" id="cd00112">
    <property type="entry name" value="LDLa"/>
    <property type="match status" value="1"/>
</dbReference>
<dbReference type="FunFam" id="4.10.400.10:FF:000069">
    <property type="entry name" value="complement component C8 beta chain"/>
    <property type="match status" value="1"/>
</dbReference>
<dbReference type="FunFam" id="2.20.100.10:FF:000001">
    <property type="entry name" value="semaphorin-5A isoform X1"/>
    <property type="match status" value="1"/>
</dbReference>
<dbReference type="Gene3D" id="4.10.400.10">
    <property type="entry name" value="Low-density Lipoprotein Receptor"/>
    <property type="match status" value="1"/>
</dbReference>
<dbReference type="Gene3D" id="2.20.100.10">
    <property type="entry name" value="Thrombospondin type-1 (TSP1) repeat"/>
    <property type="match status" value="2"/>
</dbReference>
<dbReference type="InterPro" id="IPR048831">
    <property type="entry name" value="C8A_B_C6_EGF-like"/>
</dbReference>
<dbReference type="InterPro" id="IPR009030">
    <property type="entry name" value="Growth_fac_rcpt_cys_sf"/>
</dbReference>
<dbReference type="InterPro" id="IPR036055">
    <property type="entry name" value="LDL_receptor-like_sf"/>
</dbReference>
<dbReference type="InterPro" id="IPR023415">
    <property type="entry name" value="LDLR_class-A_CS"/>
</dbReference>
<dbReference type="InterPro" id="IPR002172">
    <property type="entry name" value="LDrepeatLR_classA_rpt"/>
</dbReference>
<dbReference type="InterPro" id="IPR001862">
    <property type="entry name" value="MAC_perforin"/>
</dbReference>
<dbReference type="InterPro" id="IPR020864">
    <property type="entry name" value="MACPF"/>
</dbReference>
<dbReference type="InterPro" id="IPR020863">
    <property type="entry name" value="MACPF_CS"/>
</dbReference>
<dbReference type="InterPro" id="IPR000884">
    <property type="entry name" value="TSP1_rpt"/>
</dbReference>
<dbReference type="InterPro" id="IPR036383">
    <property type="entry name" value="TSP1_rpt_sf"/>
</dbReference>
<dbReference type="PANTHER" id="PTHR45742">
    <property type="entry name" value="COMPLEMENT COMPONENT C6"/>
    <property type="match status" value="1"/>
</dbReference>
<dbReference type="PANTHER" id="PTHR45742:SF1">
    <property type="entry name" value="COMPLEMENT COMPONENT C8 ALPHA CHAIN"/>
    <property type="match status" value="1"/>
</dbReference>
<dbReference type="Pfam" id="PF21195">
    <property type="entry name" value="EGF_C8A_B_C6"/>
    <property type="match status" value="1"/>
</dbReference>
<dbReference type="Pfam" id="PF00057">
    <property type="entry name" value="Ldl_recept_a"/>
    <property type="match status" value="1"/>
</dbReference>
<dbReference type="Pfam" id="PF01823">
    <property type="entry name" value="MACPF"/>
    <property type="match status" value="1"/>
</dbReference>
<dbReference type="Pfam" id="PF00090">
    <property type="entry name" value="TSP_1"/>
    <property type="match status" value="1"/>
</dbReference>
<dbReference type="PRINTS" id="PR00764">
    <property type="entry name" value="COMPLEMENTC9"/>
</dbReference>
<dbReference type="PRINTS" id="PR01705">
    <property type="entry name" value="TSP1REPEAT"/>
</dbReference>
<dbReference type="SMART" id="SM00192">
    <property type="entry name" value="LDLa"/>
    <property type="match status" value="1"/>
</dbReference>
<dbReference type="SMART" id="SM00457">
    <property type="entry name" value="MACPF"/>
    <property type="match status" value="1"/>
</dbReference>
<dbReference type="SMART" id="SM00209">
    <property type="entry name" value="TSP1"/>
    <property type="match status" value="2"/>
</dbReference>
<dbReference type="SUPFAM" id="SSF57184">
    <property type="entry name" value="Growth factor receptor domain"/>
    <property type="match status" value="1"/>
</dbReference>
<dbReference type="SUPFAM" id="SSF82895">
    <property type="entry name" value="TSP-1 type 1 repeat"/>
    <property type="match status" value="2"/>
</dbReference>
<dbReference type="PROSITE" id="PS00022">
    <property type="entry name" value="EGF_1"/>
    <property type="match status" value="1"/>
</dbReference>
<dbReference type="PROSITE" id="PS01209">
    <property type="entry name" value="LDLRA_1"/>
    <property type="match status" value="1"/>
</dbReference>
<dbReference type="PROSITE" id="PS50068">
    <property type="entry name" value="LDLRA_2"/>
    <property type="match status" value="1"/>
</dbReference>
<dbReference type="PROSITE" id="PS00279">
    <property type="entry name" value="MACPF_1"/>
    <property type="match status" value="1"/>
</dbReference>
<dbReference type="PROSITE" id="PS51412">
    <property type="entry name" value="MACPF_2"/>
    <property type="match status" value="1"/>
</dbReference>
<dbReference type="PROSITE" id="PS50092">
    <property type="entry name" value="TSP1"/>
    <property type="match status" value="2"/>
</dbReference>
<proteinExistence type="evidence at protein level"/>
<reference key="1">
    <citation type="journal article" date="1987" name="Biochemistry">
        <title>Complementary DNA and derived amino acid sequence of the alpha subunit of human complement protein C8: evidence for the existence of a separate alpha subunit messenger RNA.</title>
        <authorList>
            <person name="Rao A.G."/>
            <person name="Howard O.M.Z."/>
            <person name="Ng S.C."/>
            <person name="Whitehead A.S."/>
            <person name="Colten H.R."/>
            <person name="Sodetz J.M."/>
        </authorList>
    </citation>
    <scope>NUCLEOTIDE SEQUENCE [MRNA]</scope>
    <scope>PARTIAL PROTEIN SEQUENCE</scope>
    <scope>SUBCELLULAR LOCATION</scope>
    <source>
        <tissue>Liver</tissue>
    </source>
</reference>
<reference key="2">
    <citation type="submission" date="1993-02" db="EMBL/GenBank/DDBJ databases">
        <authorList>
            <person name="Sodetz J.M."/>
        </authorList>
    </citation>
    <scope>SEQUENCE REVISION TO 467-479</scope>
</reference>
<reference key="3">
    <citation type="journal article" date="1995" name="Hum. Genet.">
        <title>Genomic organization of human complement protein C8 alpha and further examination of its linkage to C8 beta.</title>
        <authorList>
            <person name="Michelotti G.A."/>
            <person name="Snider J.V."/>
            <person name="Sodetz J.M."/>
        </authorList>
    </citation>
    <scope>NUCLEOTIDE SEQUENCE [GENOMIC DNA]</scope>
    <source>
        <tissue>Blood</tissue>
    </source>
</reference>
<reference key="4">
    <citation type="journal article" date="2006" name="Nature">
        <title>The DNA sequence and biological annotation of human chromosome 1.</title>
        <authorList>
            <person name="Gregory S.G."/>
            <person name="Barlow K.F."/>
            <person name="McLay K.E."/>
            <person name="Kaul R."/>
            <person name="Swarbreck D."/>
            <person name="Dunham A."/>
            <person name="Scott C.E."/>
            <person name="Howe K.L."/>
            <person name="Woodfine K."/>
            <person name="Spencer C.C.A."/>
            <person name="Jones M.C."/>
            <person name="Gillson C."/>
            <person name="Searle S."/>
            <person name="Zhou Y."/>
            <person name="Kokocinski F."/>
            <person name="McDonald L."/>
            <person name="Evans R."/>
            <person name="Phillips K."/>
            <person name="Atkinson A."/>
            <person name="Cooper R."/>
            <person name="Jones C."/>
            <person name="Hall R.E."/>
            <person name="Andrews T.D."/>
            <person name="Lloyd C."/>
            <person name="Ainscough R."/>
            <person name="Almeida J.P."/>
            <person name="Ambrose K.D."/>
            <person name="Anderson F."/>
            <person name="Andrew R.W."/>
            <person name="Ashwell R.I.S."/>
            <person name="Aubin K."/>
            <person name="Babbage A.K."/>
            <person name="Bagguley C.L."/>
            <person name="Bailey J."/>
            <person name="Beasley H."/>
            <person name="Bethel G."/>
            <person name="Bird C.P."/>
            <person name="Bray-Allen S."/>
            <person name="Brown J.Y."/>
            <person name="Brown A.J."/>
            <person name="Buckley D."/>
            <person name="Burton J."/>
            <person name="Bye J."/>
            <person name="Carder C."/>
            <person name="Chapman J.C."/>
            <person name="Clark S.Y."/>
            <person name="Clarke G."/>
            <person name="Clee C."/>
            <person name="Cobley V."/>
            <person name="Collier R.E."/>
            <person name="Corby N."/>
            <person name="Coville G.J."/>
            <person name="Davies J."/>
            <person name="Deadman R."/>
            <person name="Dunn M."/>
            <person name="Earthrowl M."/>
            <person name="Ellington A.G."/>
            <person name="Errington H."/>
            <person name="Frankish A."/>
            <person name="Frankland J."/>
            <person name="French L."/>
            <person name="Garner P."/>
            <person name="Garnett J."/>
            <person name="Gay L."/>
            <person name="Ghori M.R.J."/>
            <person name="Gibson R."/>
            <person name="Gilby L.M."/>
            <person name="Gillett W."/>
            <person name="Glithero R.J."/>
            <person name="Grafham D.V."/>
            <person name="Griffiths C."/>
            <person name="Griffiths-Jones S."/>
            <person name="Grocock R."/>
            <person name="Hammond S."/>
            <person name="Harrison E.S.I."/>
            <person name="Hart E."/>
            <person name="Haugen E."/>
            <person name="Heath P.D."/>
            <person name="Holmes S."/>
            <person name="Holt K."/>
            <person name="Howden P.J."/>
            <person name="Hunt A.R."/>
            <person name="Hunt S.E."/>
            <person name="Hunter G."/>
            <person name="Isherwood J."/>
            <person name="James R."/>
            <person name="Johnson C."/>
            <person name="Johnson D."/>
            <person name="Joy A."/>
            <person name="Kay M."/>
            <person name="Kershaw J.K."/>
            <person name="Kibukawa M."/>
            <person name="Kimberley A.M."/>
            <person name="King A."/>
            <person name="Knights A.J."/>
            <person name="Lad H."/>
            <person name="Laird G."/>
            <person name="Lawlor S."/>
            <person name="Leongamornlert D.A."/>
            <person name="Lloyd D.M."/>
            <person name="Loveland J."/>
            <person name="Lovell J."/>
            <person name="Lush M.J."/>
            <person name="Lyne R."/>
            <person name="Martin S."/>
            <person name="Mashreghi-Mohammadi M."/>
            <person name="Matthews L."/>
            <person name="Matthews N.S.W."/>
            <person name="McLaren S."/>
            <person name="Milne S."/>
            <person name="Mistry S."/>
            <person name="Moore M.J.F."/>
            <person name="Nickerson T."/>
            <person name="O'Dell C.N."/>
            <person name="Oliver K."/>
            <person name="Palmeiri A."/>
            <person name="Palmer S.A."/>
            <person name="Parker A."/>
            <person name="Patel D."/>
            <person name="Pearce A.V."/>
            <person name="Peck A.I."/>
            <person name="Pelan S."/>
            <person name="Phelps K."/>
            <person name="Phillimore B.J."/>
            <person name="Plumb R."/>
            <person name="Rajan J."/>
            <person name="Raymond C."/>
            <person name="Rouse G."/>
            <person name="Saenphimmachak C."/>
            <person name="Sehra H.K."/>
            <person name="Sheridan E."/>
            <person name="Shownkeen R."/>
            <person name="Sims S."/>
            <person name="Skuce C.D."/>
            <person name="Smith M."/>
            <person name="Steward C."/>
            <person name="Subramanian S."/>
            <person name="Sycamore N."/>
            <person name="Tracey A."/>
            <person name="Tromans A."/>
            <person name="Van Helmond Z."/>
            <person name="Wall M."/>
            <person name="Wallis J.M."/>
            <person name="White S."/>
            <person name="Whitehead S.L."/>
            <person name="Wilkinson J.E."/>
            <person name="Willey D.L."/>
            <person name="Williams H."/>
            <person name="Wilming L."/>
            <person name="Wray P.W."/>
            <person name="Wu Z."/>
            <person name="Coulson A."/>
            <person name="Vaudin M."/>
            <person name="Sulston J.E."/>
            <person name="Durbin R.M."/>
            <person name="Hubbard T."/>
            <person name="Wooster R."/>
            <person name="Dunham I."/>
            <person name="Carter N.P."/>
            <person name="McVean G."/>
            <person name="Ross M.T."/>
            <person name="Harrow J."/>
            <person name="Olson M.V."/>
            <person name="Beck S."/>
            <person name="Rogers J."/>
            <person name="Bentley D.R."/>
        </authorList>
    </citation>
    <scope>NUCLEOTIDE SEQUENCE [LARGE SCALE GENOMIC DNA]</scope>
</reference>
<reference key="5">
    <citation type="journal article" date="2004" name="Genome Res.">
        <title>The status, quality, and expansion of the NIH full-length cDNA project: the Mammalian Gene Collection (MGC).</title>
        <authorList>
            <consortium name="The MGC Project Team"/>
        </authorList>
    </citation>
    <scope>NUCLEOTIDE SEQUENCE [LARGE SCALE MRNA]</scope>
    <scope>VARIANT LYS-93</scope>
</reference>
<reference key="6">
    <citation type="journal article" date="1980" name="J. Biol. Chem.">
        <title>The eighth component of human complement. Purification and physicochemical characterization of its unusual subunit structure.</title>
        <authorList>
            <person name="Steckel E.W."/>
            <person name="York R.G."/>
            <person name="Monahan J.B."/>
            <person name="Sodetz J.M."/>
        </authorList>
    </citation>
    <scope>PARTIAL PROTEIN SEQUENCE</scope>
    <scope>FUNCTION</scope>
    <scope>SUBUNIT</scope>
</reference>
<reference key="7">
    <citation type="journal article" date="1983" name="J. Biol. Chem.">
        <title>Evidence of direct insertion of terminal complement proteins into cell membrane bilayers during cytolysis. Labeling by a photosensitive membrane probe reveals a major role for the eighth and ninth components.</title>
        <authorList>
            <person name="Steckel E.W."/>
            <person name="Welbaum B.E."/>
            <person name="Sodetz J.M."/>
        </authorList>
    </citation>
    <scope>FUNCTION</scope>
</reference>
<reference key="8">
    <citation type="journal article" date="1998" name="J. Immunol.">
        <title>Genetic basis of human complement C8 alpha-gamma deficiency.</title>
        <authorList>
            <person name="Kojima T."/>
            <person name="Horiuchi T."/>
            <person name="Nishizaka H."/>
            <person name="Fukumori Y."/>
            <person name="Amano T."/>
            <person name="Nagasawa K."/>
            <person name="Niho Y."/>
            <person name="Hayashi K."/>
        </authorList>
    </citation>
    <scope>INVOLVEMENT IN C8D1</scope>
    <scope>VARIANT C8D1 424-ARG--CYS-584 DEL</scope>
</reference>
<reference key="9">
    <citation type="journal article" date="1999" name="J. Biol. Chem.">
        <title>The four terminal components of the complement system are C-mannosylated on multiple tryptophan residues.</title>
        <authorList>
            <person name="Hofsteenge J."/>
            <person name="Blommers M."/>
            <person name="Hess D."/>
            <person name="Furmanek A."/>
            <person name="Miroshnichenko O."/>
        </authorList>
    </citation>
    <scope>GLYCOSYLATION AT TRP-44; TRP-542; TRP-545 AND TRP-548</scope>
</reference>
<reference key="10">
    <citation type="journal article" date="2005" name="J. Proteome Res.">
        <title>Human plasma N-glycoproteome analysis by immunoaffinity subtraction, hydrazide chemistry, and mass spectrometry.</title>
        <authorList>
            <person name="Liu T."/>
            <person name="Qian W.-J."/>
            <person name="Gritsenko M.A."/>
            <person name="Camp D.G. II"/>
            <person name="Monroe M.E."/>
            <person name="Moore R.J."/>
            <person name="Smith R.D."/>
        </authorList>
    </citation>
    <scope>GLYCOSYLATION [LARGE SCALE ANALYSIS] AT ASN-437</scope>
    <source>
        <tissue>Plasma</tissue>
    </source>
</reference>
<reference key="11">
    <citation type="journal article" date="2009" name="J. Proteome Res.">
        <title>Glycoproteomics analysis of human liver tissue by combination of multiple enzyme digestion and hydrazide chemistry.</title>
        <authorList>
            <person name="Chen R."/>
            <person name="Jiang X."/>
            <person name="Sun D."/>
            <person name="Han G."/>
            <person name="Wang F."/>
            <person name="Ye M."/>
            <person name="Wang L."/>
            <person name="Zou H."/>
        </authorList>
    </citation>
    <scope>GLYCOSYLATION [LARGE SCALE ANALYSIS] AT ASN-437</scope>
    <source>
        <tissue>Liver</tissue>
    </source>
</reference>
<reference key="12">
    <citation type="journal article" date="2012" name="Cell Rep.">
        <title>Assembly and regulation of the membrane attack complex based on structures of C5b6 and sC5b9.</title>
        <authorList>
            <person name="Hadders M.A."/>
            <person name="Bubeck D."/>
            <person name="Roversi P."/>
            <person name="Hakobyan S."/>
            <person name="Forneris F."/>
            <person name="Morgan B.P."/>
            <person name="Pangburn M.K."/>
            <person name="Llorca O."/>
            <person name="Lea S.M."/>
            <person name="Gros P."/>
        </authorList>
    </citation>
    <scope>FUNCTION</scope>
    <scope>SUBUNIT</scope>
</reference>
<reference key="13">
    <citation type="journal article" date="2014" name="J. Proteomics">
        <title>An enzyme assisted RP-RPLC approach for in-depth analysis of human liver phosphoproteome.</title>
        <authorList>
            <person name="Bian Y."/>
            <person name="Song C."/>
            <person name="Cheng K."/>
            <person name="Dong M."/>
            <person name="Wang F."/>
            <person name="Huang J."/>
            <person name="Sun D."/>
            <person name="Wang L."/>
            <person name="Ye M."/>
            <person name="Zou H."/>
        </authorList>
    </citation>
    <scope>IDENTIFICATION BY MASS SPECTROMETRY [LARGE SCALE ANALYSIS]</scope>
    <source>
        <tissue>Liver</tissue>
    </source>
</reference>
<reference key="14">
    <citation type="journal article" date="2016" name="Cell Rep.">
        <title>Heterogeneous MAC initiator and pore structures in a lipid bilayer by phase-plate cryo-electron tomography.</title>
        <authorList>
            <person name="Sharp T.H."/>
            <person name="Koster A.J."/>
            <person name="Gros P."/>
        </authorList>
    </citation>
    <scope>FUNCTION</scope>
    <scope>SUBUNIT</scope>
</reference>
<reference key="15">
    <citation type="journal article" date="2016" name="Nat. Commun.">
        <title>Structural basis of complement membrane attack complex formation.</title>
        <authorList>
            <person name="Serna M."/>
            <person name="Giles J.L."/>
            <person name="Morgan B.P."/>
            <person name="Bubeck D."/>
        </authorList>
    </citation>
    <scope>FUNCTION</scope>
    <scope>SUBUNIT</scope>
</reference>
<reference key="16">
    <citation type="journal article" date="2019" name="Nat. Commun.">
        <title>Single-molecule kinetics of pore assembly by the membrane attack complex.</title>
        <authorList>
            <person name="Parsons E.S."/>
            <person name="Stanley G.J."/>
            <person name="Pyne A.L.B."/>
            <person name="Hodel A.W."/>
            <person name="Nievergelt A.P."/>
            <person name="Menny A."/>
            <person name="Yon A.R."/>
            <person name="Rowley A."/>
            <person name="Richter R.P."/>
            <person name="Fantner G.E."/>
            <person name="Bubeck D."/>
            <person name="Hoogenboom B.W."/>
        </authorList>
    </citation>
    <scope>FUNCTION</scope>
    <scope>SUBUNIT</scope>
</reference>
<reference key="17">
    <citation type="journal article" date="2007" name="Science">
        <title>Structure of C8alpha-MACPF reveals mechanism of membrane attack in complement immune defense.</title>
        <authorList>
            <person name="Hadders M.A."/>
            <person name="Beringer D.X."/>
            <person name="Gros P."/>
        </authorList>
    </citation>
    <scope>X-RAY CRYSTALLOGRAPHY (2.5 ANGSTROMS) OF 133-492</scope>
    <scope>FUNCTION</scope>
    <scope>DISULFIDE BONDS</scope>
</reference>
<reference key="18">
    <citation type="journal article" date="2008" name="J. Mol. Biol.">
        <title>Crystal structure of the MACPF domain of human complement protein C8 alpha in complex with the C8 gamma subunit.</title>
        <authorList>
            <person name="Slade D.J."/>
            <person name="Lovelace L.L."/>
            <person name="Chruszcz M."/>
            <person name="Minor W."/>
            <person name="Lebioda L."/>
            <person name="Sodetz J.M."/>
        </authorList>
    </citation>
    <scope>X-RAY CRYSTALLOGRAPHY (2.15 ANGSTROMS) OF 133-492 IN COMPLEX WITH C8G</scope>
    <scope>INTERCHAIN DISULFIDE BOND</scope>
</reference>
<reference key="19">
    <citation type="journal article" date="2008" name="Mol. Immunol.">
        <title>Crystal structure of complement protein C8gamma in complex with a peptide containing the C8gamma binding site on C8alpha: implications for C8gamma ligand binding.</title>
        <authorList>
            <person name="Lovelace L.L."/>
            <person name="Chiswell B."/>
            <person name="Slade D.J."/>
            <person name="Sodetz J.M."/>
            <person name="Lebioda L."/>
        </authorList>
    </citation>
    <scope>X-RAY CRYSTALLOGRAPHY (1.81 ANGSTROMS) OF 188-198 IN COMPLEX WITH C8G</scope>
</reference>
<reference evidence="29 30" key="20">
    <citation type="journal article" date="2011" name="J. Biol. Chem.">
        <title>Structure of human C8 protein provides mechanistic insight into membrane pore formation by complement.</title>
        <authorList>
            <person name="Lovelace L.L."/>
            <person name="Cooper C.L."/>
            <person name="Sodetz J.M."/>
            <person name="Lebioda L."/>
        </authorList>
    </citation>
    <scope>X-RAY CRYSTALLOGRAPHY (2.15 ANGSTROMS) OF 133-492 IN COMPLEX WITH CALCIUM; C8B AND C8G</scope>
    <scope>SUBUNIT</scope>
    <scope>DISULFIDE BONDS</scope>
</reference>
<reference evidence="31 32" key="21">
    <citation type="journal article" date="2018" name="Nat. Commun.">
        <title>CryoEM reveals how the complement membrane attack complex ruptures lipid bilayers.</title>
        <authorList>
            <person name="Menny A."/>
            <person name="Serna M."/>
            <person name="Boyd C.M."/>
            <person name="Gardner S."/>
            <person name="Joseph A.P."/>
            <person name="Morgan B.P."/>
            <person name="Topf M."/>
            <person name="Brooks N.J."/>
            <person name="Bubeck D."/>
        </authorList>
    </citation>
    <scope>STRUCTURE BY ELECTRON MICROSCOPY (5.60 ANGSTROMS) OF 31-584 OF MEMBRANE ATTACK COMPLEX</scope>
    <scope>DISULFIDE BONDS</scope>
    <scope>FUNCTION</scope>
    <scope>SUBCELLULAR LOCATION</scope>
    <scope>SUBUNIT</scope>
    <scope>GLYCOSYLATION AT ASN-437</scope>
</reference>
<reference evidence="33 34" key="22">
    <citation type="journal article" date="2021" name="Nat. Commun.">
        <title>Structural basis of soluble membrane attack complex packaging for clearance.</title>
        <authorList>
            <person name="Menny A."/>
            <person name="Lukassen M.V."/>
            <person name="Couves E.C."/>
            <person name="Franc V."/>
            <person name="Heck A.J.R."/>
            <person name="Bubeck D."/>
        </authorList>
    </citation>
    <scope>STRUCTURE BY ELECTRON MICROSCOPY (3.27 ANGSTROMS) OF 31-584 OF MEMBRANE ATTACK COMPLEX</scope>
    <scope>ACTIVITY REGULATION</scope>
</reference>
<reference evidence="35 36 37" key="23">
    <citation type="journal article" date="2023" name="Nat. Commun.">
        <title>Structural basis for membrane attack complex inhibition by CD59.</title>
        <authorList>
            <person name="Couves E.C."/>
            <person name="Gardner S."/>
            <person name="Voisin T.B."/>
            <person name="Bickel J.K."/>
            <person name="Stansfeld P.J."/>
            <person name="Tate E.W."/>
            <person name="Bubeck D."/>
        </authorList>
    </citation>
    <scope>STRUCTURE BY ELECTRON MICROSCOPY (3.00 ANGSTROMS) IN COMPLEX WITH THE MEMBRANE ATTACK COMPLEX</scope>
    <scope>ACTIVITY REGULATION</scope>
</reference>
<reference key="24">
    <citation type="journal article" date="1995" name="Hum. Genet.">
        <title>The eighth component of human complement: molecular basis of C8A (C81) polymorphism.</title>
        <authorList>
            <person name="Zhang L."/>
            <person name="Rittner C."/>
            <person name="Sodetz J.M."/>
            <person name="Schneider P.M."/>
            <person name="Kaufmann T."/>
        </authorList>
    </citation>
    <scope>VARIANT C8A*B LYS-93</scope>
</reference>
<sequence length="584" mass="65163">MFAVVFFILSLMTCQPGVTAQEKVNQRVRRAATPAAVTCQLSNWSEWTDCFPCQDKKYRHRSLLQPNKFGGTICSGDIWDQASCSSSTTCVRQAQCGQDFQCKETGRCLKRHLVCNGDQDCLDGSDEDDCEDVRAIDEDCSQYEPIPGSQKAALGYNILTQEDAQSVYDASYYGGQCETVYNGEWRELRYDSTCERLYYGDDEKYFRKPYNFLKYHFEALADTGISSEFYDNANDLLSKVKKDKSDSFGVTIGIGPAGSPLLVGVGVSHSQDTSFLNELNKYNEKKFIFTRIFTKVQTAHFKMRKDDIMLDEGMLQSLMELPDQYNYGMYAKFINDYGTHYITSGSMGGIYEYILVIDKAKMESLGITSRDITTCFGGSLGIQYEDKINVGGGLSGDHCKKFGGGKTERARKAMAVEDIISRVRGGSSGWSGGLAQNRSTITYRSWGRSLKYNPVVIDFEMQPIHEVLRHTSLGPLEAKRQNLRRALDQYLMEFNACRCGPCFNNGVPILEGTSCRCQCRLGSLGAACEQTQTEGAKADGSWSCWSSWSVCRAGIQERRRECDNPAPQNGGASCPGRKVQTQAC</sequence>
<evidence type="ECO:0000255" key="1"/>
<evidence type="ECO:0000255" key="2">
    <source>
        <dbReference type="PROSITE-ProRule" id="PRU00124"/>
    </source>
</evidence>
<evidence type="ECO:0000255" key="3">
    <source>
        <dbReference type="PROSITE-ProRule" id="PRU00210"/>
    </source>
</evidence>
<evidence type="ECO:0000255" key="4">
    <source>
        <dbReference type="PROSITE-ProRule" id="PRU00745"/>
    </source>
</evidence>
<evidence type="ECO:0000256" key="5">
    <source>
        <dbReference type="SAM" id="MobiDB-lite"/>
    </source>
</evidence>
<evidence type="ECO:0000269" key="6">
    <source>
    </source>
</evidence>
<evidence type="ECO:0000269" key="7">
    <source>
    </source>
</evidence>
<evidence type="ECO:0000269" key="8">
    <source>
    </source>
</evidence>
<evidence type="ECO:0000269" key="9">
    <source>
    </source>
</evidence>
<evidence type="ECO:0000269" key="10">
    <source>
    </source>
</evidence>
<evidence type="ECO:0000269" key="11">
    <source>
    </source>
</evidence>
<evidence type="ECO:0000269" key="12">
    <source>
    </source>
</evidence>
<evidence type="ECO:0000269" key="13">
    <source>
    </source>
</evidence>
<evidence type="ECO:0000269" key="14">
    <source>
    </source>
</evidence>
<evidence type="ECO:0000269" key="15">
    <source>
    </source>
</evidence>
<evidence type="ECO:0000269" key="16">
    <source>
    </source>
</evidence>
<evidence type="ECO:0000269" key="17">
    <source>
    </source>
</evidence>
<evidence type="ECO:0000269" key="18">
    <source>
    </source>
</evidence>
<evidence type="ECO:0000269" key="19">
    <source>
    </source>
</evidence>
<evidence type="ECO:0000269" key="20">
    <source>
    </source>
</evidence>
<evidence type="ECO:0000269" key="21">
    <source>
    </source>
</evidence>
<evidence type="ECO:0000269" key="22">
    <source>
    </source>
</evidence>
<evidence type="ECO:0000269" key="23">
    <source>
    </source>
</evidence>
<evidence type="ECO:0000269" key="24">
    <source>
    </source>
</evidence>
<evidence type="ECO:0000269" key="25">
    <source>
    </source>
</evidence>
<evidence type="ECO:0000303" key="26">
    <source>
    </source>
</evidence>
<evidence type="ECO:0000305" key="27"/>
<evidence type="ECO:0000312" key="28">
    <source>
        <dbReference type="HGNC" id="HGNC:1352"/>
    </source>
</evidence>
<evidence type="ECO:0007744" key="29">
    <source>
        <dbReference type="PDB" id="2RD7"/>
    </source>
</evidence>
<evidence type="ECO:0007744" key="30">
    <source>
        <dbReference type="PDB" id="3OJY"/>
    </source>
</evidence>
<evidence type="ECO:0007744" key="31">
    <source>
        <dbReference type="PDB" id="6H03"/>
    </source>
</evidence>
<evidence type="ECO:0007744" key="32">
    <source>
        <dbReference type="PDB" id="6H04"/>
    </source>
</evidence>
<evidence type="ECO:0007744" key="33">
    <source>
        <dbReference type="PDB" id="7NYC"/>
    </source>
</evidence>
<evidence type="ECO:0007744" key="34">
    <source>
        <dbReference type="PDB" id="7NYD"/>
    </source>
</evidence>
<evidence type="ECO:0007744" key="35">
    <source>
        <dbReference type="PDB" id="8B0F"/>
    </source>
</evidence>
<evidence type="ECO:0007744" key="36">
    <source>
        <dbReference type="PDB" id="8B0G"/>
    </source>
</evidence>
<evidence type="ECO:0007744" key="37">
    <source>
        <dbReference type="PDB" id="8B0H"/>
    </source>
</evidence>
<evidence type="ECO:0007829" key="38">
    <source>
        <dbReference type="PDB" id="2QOS"/>
    </source>
</evidence>
<evidence type="ECO:0007829" key="39">
    <source>
        <dbReference type="PDB" id="2QQH"/>
    </source>
</evidence>
<evidence type="ECO:0007829" key="40">
    <source>
        <dbReference type="PDB" id="2RD7"/>
    </source>
</evidence>
<evidence type="ECO:0007829" key="41">
    <source>
        <dbReference type="PDB" id="3OJY"/>
    </source>
</evidence>
<evidence type="ECO:0007829" key="42">
    <source>
        <dbReference type="PDB" id="7NYD"/>
    </source>
</evidence>
<organism>
    <name type="scientific">Homo sapiens</name>
    <name type="common">Human</name>
    <dbReference type="NCBI Taxonomy" id="9606"/>
    <lineage>
        <taxon>Eukaryota</taxon>
        <taxon>Metazoa</taxon>
        <taxon>Chordata</taxon>
        <taxon>Craniata</taxon>
        <taxon>Vertebrata</taxon>
        <taxon>Euteleostomi</taxon>
        <taxon>Mammalia</taxon>
        <taxon>Eutheria</taxon>
        <taxon>Euarchontoglires</taxon>
        <taxon>Primates</taxon>
        <taxon>Haplorrhini</taxon>
        <taxon>Catarrhini</taxon>
        <taxon>Hominidae</taxon>
        <taxon>Homo</taxon>
    </lineage>
</organism>
<protein>
    <recommendedName>
        <fullName evidence="26">Complement component C8 alpha chain</fullName>
    </recommendedName>
    <alternativeName>
        <fullName evidence="26">Complement component 8 subunit alpha</fullName>
    </alternativeName>
</protein>